<organism>
    <name type="scientific">Methylococcus capsulatus (strain ATCC 33009 / NCIMB 11132 / Bath)</name>
    <dbReference type="NCBI Taxonomy" id="243233"/>
    <lineage>
        <taxon>Bacteria</taxon>
        <taxon>Pseudomonadati</taxon>
        <taxon>Pseudomonadota</taxon>
        <taxon>Gammaproteobacteria</taxon>
        <taxon>Methylococcales</taxon>
        <taxon>Methylococcaceae</taxon>
        <taxon>Methylococcus</taxon>
    </lineage>
</organism>
<dbReference type="EC" id="3.1.3.77" evidence="1"/>
<dbReference type="EMBL" id="AE017282">
    <property type="protein sequence ID" value="AAU92902.1"/>
    <property type="molecule type" value="Genomic_DNA"/>
</dbReference>
<dbReference type="RefSeq" id="WP_010960123.1">
    <property type="nucleotide sequence ID" value="NC_002977.6"/>
</dbReference>
<dbReference type="SMR" id="Q60AP9"/>
<dbReference type="STRING" id="243233.MCA0797"/>
<dbReference type="GeneID" id="88223110"/>
<dbReference type="KEGG" id="mca:MCA0797"/>
<dbReference type="eggNOG" id="COG4229">
    <property type="taxonomic scope" value="Bacteria"/>
</dbReference>
<dbReference type="HOGENOM" id="CLU_023273_0_0_6"/>
<dbReference type="UniPathway" id="UPA00904">
    <property type="reaction ID" value="UER00876"/>
</dbReference>
<dbReference type="UniPathway" id="UPA00904">
    <property type="reaction ID" value="UER00877"/>
</dbReference>
<dbReference type="Proteomes" id="UP000006821">
    <property type="component" value="Chromosome"/>
</dbReference>
<dbReference type="GO" id="GO:0043715">
    <property type="term" value="F:2,3-diketo-5-methylthiopentyl-1-phosphate enolase activity"/>
    <property type="evidence" value="ECO:0007669"/>
    <property type="project" value="UniProtKB-UniRule"/>
</dbReference>
<dbReference type="GO" id="GO:0043716">
    <property type="term" value="F:2-hydroxy-3-keto-5-methylthiopentenyl-1-phosphate phosphatase activity"/>
    <property type="evidence" value="ECO:0007669"/>
    <property type="project" value="UniProtKB-UniRule"/>
</dbReference>
<dbReference type="GO" id="GO:0043874">
    <property type="term" value="F:acireductone synthase activity"/>
    <property type="evidence" value="ECO:0007669"/>
    <property type="project" value="UniProtKB-EC"/>
</dbReference>
<dbReference type="GO" id="GO:0000287">
    <property type="term" value="F:magnesium ion binding"/>
    <property type="evidence" value="ECO:0007669"/>
    <property type="project" value="UniProtKB-UniRule"/>
</dbReference>
<dbReference type="GO" id="GO:0019509">
    <property type="term" value="P:L-methionine salvage from methylthioadenosine"/>
    <property type="evidence" value="ECO:0007669"/>
    <property type="project" value="UniProtKB-UniRule"/>
</dbReference>
<dbReference type="CDD" id="cd01629">
    <property type="entry name" value="HAD_EP"/>
    <property type="match status" value="1"/>
</dbReference>
<dbReference type="Gene3D" id="1.10.720.60">
    <property type="match status" value="1"/>
</dbReference>
<dbReference type="Gene3D" id="3.40.50.1000">
    <property type="entry name" value="HAD superfamily/HAD-like"/>
    <property type="match status" value="1"/>
</dbReference>
<dbReference type="HAMAP" id="MF_01681">
    <property type="entry name" value="Salvage_MtnC"/>
    <property type="match status" value="1"/>
</dbReference>
<dbReference type="InterPro" id="IPR023943">
    <property type="entry name" value="Enolase-ppase_E1"/>
</dbReference>
<dbReference type="InterPro" id="IPR036412">
    <property type="entry name" value="HAD-like_sf"/>
</dbReference>
<dbReference type="InterPro" id="IPR006439">
    <property type="entry name" value="HAD-SF_hydro_IA"/>
</dbReference>
<dbReference type="InterPro" id="IPR023214">
    <property type="entry name" value="HAD_sf"/>
</dbReference>
<dbReference type="NCBIfam" id="TIGR01691">
    <property type="entry name" value="enolase-ppase"/>
    <property type="match status" value="1"/>
</dbReference>
<dbReference type="NCBIfam" id="TIGR01549">
    <property type="entry name" value="HAD-SF-IA-v1"/>
    <property type="match status" value="1"/>
</dbReference>
<dbReference type="PANTHER" id="PTHR20371">
    <property type="entry name" value="ENOLASE-PHOSPHATASE E1"/>
    <property type="match status" value="1"/>
</dbReference>
<dbReference type="PANTHER" id="PTHR20371:SF1">
    <property type="entry name" value="ENOLASE-PHOSPHATASE E1"/>
    <property type="match status" value="1"/>
</dbReference>
<dbReference type="Pfam" id="PF00702">
    <property type="entry name" value="Hydrolase"/>
    <property type="match status" value="1"/>
</dbReference>
<dbReference type="SFLD" id="SFLDG01133">
    <property type="entry name" value="C1.5.4:_Enolase-phosphatase_Li"/>
    <property type="match status" value="1"/>
</dbReference>
<dbReference type="SFLD" id="SFLDF00044">
    <property type="entry name" value="enolase-phosphatase"/>
    <property type="match status" value="1"/>
</dbReference>
<dbReference type="SUPFAM" id="SSF56784">
    <property type="entry name" value="HAD-like"/>
    <property type="match status" value="1"/>
</dbReference>
<protein>
    <recommendedName>
        <fullName evidence="1">Enolase-phosphatase E1</fullName>
        <ecNumber evidence="1">3.1.3.77</ecNumber>
    </recommendedName>
    <alternativeName>
        <fullName evidence="1">2,3-diketo-5-methylthio-1-phosphopentane phosphatase</fullName>
    </alternativeName>
</protein>
<keyword id="KW-0028">Amino-acid biosynthesis</keyword>
<keyword id="KW-0378">Hydrolase</keyword>
<keyword id="KW-0460">Magnesium</keyword>
<keyword id="KW-0479">Metal-binding</keyword>
<keyword id="KW-0486">Methionine biosynthesis</keyword>
<keyword id="KW-1185">Reference proteome</keyword>
<accession>Q60AP9</accession>
<proteinExistence type="inferred from homology"/>
<evidence type="ECO:0000255" key="1">
    <source>
        <dbReference type="HAMAP-Rule" id="MF_01681"/>
    </source>
</evidence>
<reference key="1">
    <citation type="journal article" date="2004" name="PLoS Biol.">
        <title>Genomic insights into methanotrophy: the complete genome sequence of Methylococcus capsulatus (Bath).</title>
        <authorList>
            <person name="Ward N.L."/>
            <person name="Larsen O."/>
            <person name="Sakwa J."/>
            <person name="Bruseth L."/>
            <person name="Khouri H.M."/>
            <person name="Durkin A.S."/>
            <person name="Dimitrov G."/>
            <person name="Jiang L."/>
            <person name="Scanlan D."/>
            <person name="Kang K.H."/>
            <person name="Lewis M.R."/>
            <person name="Nelson K.E."/>
            <person name="Methe B.A."/>
            <person name="Wu M."/>
            <person name="Heidelberg J.F."/>
            <person name="Paulsen I.T."/>
            <person name="Fouts D.E."/>
            <person name="Ravel J."/>
            <person name="Tettelin H."/>
            <person name="Ren Q."/>
            <person name="Read T.D."/>
            <person name="DeBoy R.T."/>
            <person name="Seshadri R."/>
            <person name="Salzberg S.L."/>
            <person name="Jensen H.B."/>
            <person name="Birkeland N.K."/>
            <person name="Nelson W.C."/>
            <person name="Dodson R.J."/>
            <person name="Grindhaug S.H."/>
            <person name="Holt I.E."/>
            <person name="Eidhammer I."/>
            <person name="Jonasen I."/>
            <person name="Vanaken S."/>
            <person name="Utterback T.R."/>
            <person name="Feldblyum T.V."/>
            <person name="Fraser C.M."/>
            <person name="Lillehaug J.R."/>
            <person name="Eisen J.A."/>
        </authorList>
    </citation>
    <scope>NUCLEOTIDE SEQUENCE [LARGE SCALE GENOMIC DNA]</scope>
    <source>
        <strain>ATCC 33009 / NCIMB 11132 / Bath</strain>
    </source>
</reference>
<comment type="function">
    <text evidence="1">Bifunctional enzyme that catalyzes the enolization of 2,3-diketo-5-methylthiopentyl-1-phosphate (DK-MTP-1-P) into the intermediate 2-hydroxy-3-keto-5-methylthiopentenyl-1-phosphate (HK-MTPenyl-1-P), which is then dephosphorylated to form the acireductone 1,2-dihydroxy-3-keto-5-methylthiopentene (DHK-MTPene).</text>
</comment>
<comment type="catalytic activity">
    <reaction evidence="1">
        <text>5-methylsulfanyl-2,3-dioxopentyl phosphate + H2O = 1,2-dihydroxy-5-(methylsulfanyl)pent-1-en-3-one + phosphate</text>
        <dbReference type="Rhea" id="RHEA:21700"/>
        <dbReference type="ChEBI" id="CHEBI:15377"/>
        <dbReference type="ChEBI" id="CHEBI:43474"/>
        <dbReference type="ChEBI" id="CHEBI:49252"/>
        <dbReference type="ChEBI" id="CHEBI:58828"/>
        <dbReference type="EC" id="3.1.3.77"/>
    </reaction>
</comment>
<comment type="cofactor">
    <cofactor evidence="1">
        <name>Mg(2+)</name>
        <dbReference type="ChEBI" id="CHEBI:18420"/>
    </cofactor>
    <text evidence="1">Binds 1 Mg(2+) ion per subunit.</text>
</comment>
<comment type="pathway">
    <text evidence="1">Amino-acid biosynthesis; L-methionine biosynthesis via salvage pathway; L-methionine from S-methyl-5-thio-alpha-D-ribose 1-phosphate: step 3/6.</text>
</comment>
<comment type="pathway">
    <text evidence="1">Amino-acid biosynthesis; L-methionine biosynthesis via salvage pathway; L-methionine from S-methyl-5-thio-alpha-D-ribose 1-phosphate: step 4/6.</text>
</comment>
<comment type="subunit">
    <text evidence="1">Monomer.</text>
</comment>
<comment type="similarity">
    <text evidence="1">Belongs to the HAD-like hydrolase superfamily. MasA/MtnC family.</text>
</comment>
<feature type="chain" id="PRO_0000357382" description="Enolase-phosphatase E1">
    <location>
        <begin position="1"/>
        <end position="227"/>
    </location>
</feature>
<gene>
    <name evidence="1" type="primary">mtnC</name>
    <name type="ordered locus">MCA0797</name>
</gene>
<name>MTNC_METCA</name>
<sequence>MIRAILTDIEGTTSSLSFVKETLFPYARARMADFVRGHARDATVQALLADAKAAAGDPSMDDEHVIARLVRWIDEDRKITPLKALQGLIWEEGYRNRDFFGHVYDDAVRRLKAWHEQGISLYVFSSGSVHAQRLLFGHTAAGDLQPLFSGYFDTRIGAKQEPAAYSAIARELNLPPSEILFLSDIEAELDAAREAGYKTFMLVREGGAKASHHPQGADFDAIRPELL</sequence>